<organism>
    <name type="scientific">Kluyveromyces lactis (strain ATCC 8585 / CBS 2359 / DSM 70799 / NBRC 1267 / NRRL Y-1140 / WM37)</name>
    <name type="common">Yeast</name>
    <name type="synonym">Candida sphaerica</name>
    <dbReference type="NCBI Taxonomy" id="284590"/>
    <lineage>
        <taxon>Eukaryota</taxon>
        <taxon>Fungi</taxon>
        <taxon>Dikarya</taxon>
        <taxon>Ascomycota</taxon>
        <taxon>Saccharomycotina</taxon>
        <taxon>Saccharomycetes</taxon>
        <taxon>Saccharomycetales</taxon>
        <taxon>Saccharomycetaceae</taxon>
        <taxon>Kluyveromyces</taxon>
    </lineage>
</organism>
<gene>
    <name type="primary">SHE3</name>
    <name type="ordered locus">KLLA0D09042g</name>
</gene>
<evidence type="ECO:0000250" key="1"/>
<evidence type="ECO:0000255" key="2"/>
<evidence type="ECO:0000256" key="3">
    <source>
        <dbReference type="SAM" id="MobiDB-lite"/>
    </source>
</evidence>
<evidence type="ECO:0000305" key="4"/>
<dbReference type="EMBL" id="CR382124">
    <property type="protein sequence ID" value="CAH00561.1"/>
    <property type="molecule type" value="Genomic_DNA"/>
</dbReference>
<dbReference type="RefSeq" id="XP_453465.1">
    <property type="nucleotide sequence ID" value="XM_453465.1"/>
</dbReference>
<dbReference type="SMR" id="Q6CRH4"/>
<dbReference type="FunCoup" id="Q6CRH4">
    <property type="interactions" value="1502"/>
</dbReference>
<dbReference type="STRING" id="284590.Q6CRH4"/>
<dbReference type="PaxDb" id="284590-Q6CRH4"/>
<dbReference type="KEGG" id="kla:KLLA0_D09042g"/>
<dbReference type="eggNOG" id="ENOG502QSQX">
    <property type="taxonomic scope" value="Eukaryota"/>
</dbReference>
<dbReference type="HOGENOM" id="CLU_038734_0_0_1"/>
<dbReference type="InParanoid" id="Q6CRH4"/>
<dbReference type="OMA" id="NISHYNH"/>
<dbReference type="Proteomes" id="UP000000598">
    <property type="component" value="Chromosome D"/>
</dbReference>
<dbReference type="GO" id="GO:0005789">
    <property type="term" value="C:endoplasmic reticulum membrane"/>
    <property type="evidence" value="ECO:0007669"/>
    <property type="project" value="UniProtKB-SubCell"/>
</dbReference>
<dbReference type="GO" id="GO:0003723">
    <property type="term" value="F:RNA binding"/>
    <property type="evidence" value="ECO:0007669"/>
    <property type="project" value="UniProtKB-KW"/>
</dbReference>
<dbReference type="GO" id="GO:0048309">
    <property type="term" value="P:endoplasmic reticulum inheritance"/>
    <property type="evidence" value="ECO:0007669"/>
    <property type="project" value="InterPro"/>
</dbReference>
<dbReference type="GO" id="GO:0051028">
    <property type="term" value="P:mRNA transport"/>
    <property type="evidence" value="ECO:0007669"/>
    <property type="project" value="UniProtKB-KW"/>
</dbReference>
<dbReference type="InterPro" id="IPR031398">
    <property type="entry name" value="She3"/>
</dbReference>
<dbReference type="Pfam" id="PF17078">
    <property type="entry name" value="SHE3"/>
    <property type="match status" value="1"/>
</dbReference>
<comment type="function">
    <text evidence="1">RNA-binding protein that binds specific mRNAs including the ASH1 mRNA, coding for a repressor of the HO endonuclease. Part of the mRNA localization machinery that restricts accumulation of certain proteins to the bud and in the daughter cell. Required for the delivery of cortical endoplasmic reticulum into the emerging bud (By similarity).</text>
</comment>
<comment type="subcellular location">
    <subcellularLocation>
        <location evidence="1">Endoplasmic reticulum membrane</location>
        <topology evidence="1">Peripheral membrane protein</topology>
    </subcellularLocation>
</comment>
<comment type="similarity">
    <text evidence="4">Belongs to the SHE3 family.</text>
</comment>
<keyword id="KW-0175">Coiled coil</keyword>
<keyword id="KW-0256">Endoplasmic reticulum</keyword>
<keyword id="KW-0472">Membrane</keyword>
<keyword id="KW-0509">mRNA transport</keyword>
<keyword id="KW-1185">Reference proteome</keyword>
<keyword id="KW-0694">RNA-binding</keyword>
<keyword id="KW-0813">Transport</keyword>
<feature type="chain" id="PRO_0000408932" description="SWI5-dependent HO expression protein 3">
    <location>
        <begin position="1"/>
        <end position="345"/>
    </location>
</feature>
<feature type="region of interest" description="Disordered" evidence="3">
    <location>
        <begin position="273"/>
        <end position="345"/>
    </location>
</feature>
<feature type="coiled-coil region" evidence="2">
    <location>
        <begin position="92"/>
        <end position="272"/>
    </location>
</feature>
<feature type="compositionally biased region" description="Polar residues" evidence="3">
    <location>
        <begin position="297"/>
        <end position="315"/>
    </location>
</feature>
<feature type="compositionally biased region" description="Low complexity" evidence="3">
    <location>
        <begin position="316"/>
        <end position="325"/>
    </location>
</feature>
<feature type="compositionally biased region" description="Polar residues" evidence="3">
    <location>
        <begin position="335"/>
        <end position="345"/>
    </location>
</feature>
<name>SHE3_KLULA</name>
<protein>
    <recommendedName>
        <fullName>SWI5-dependent HO expression protein 3</fullName>
    </recommendedName>
</protein>
<sequence length="345" mass="39235">MKMTEAQEFLTPTKGVNSSKFNINHGHFITNLENQESPSKLGAYTPGKYSTSRVIESLHKQIDELTSTNLKMTSQCHQLVNELESSGKKQNKQLETISRLQTENMNLNAILDRKTNRMNELESSLKKQTVFNEDAAKKNLELEETVKKLSLENEKLTEQSTLYKIQYEAIVDAHQSYKQFFTNETSTLRNDLMSLKQSMTKQLESKTKEVLAIDEKIQNKLESLDSAQESFKKHASEQIEDNIKELRLDSWQSSLREAQALLKEYKSQAQAEGITIQEQPKASIPQLRNPKRKTSGQKRTSFYGTPTGFSIPSNKQTPPSSSSTQLPGLKRASSIRISSDPNRNR</sequence>
<accession>Q6CRH4</accession>
<proteinExistence type="inferred from homology"/>
<reference key="1">
    <citation type="journal article" date="2004" name="Nature">
        <title>Genome evolution in yeasts.</title>
        <authorList>
            <person name="Dujon B."/>
            <person name="Sherman D."/>
            <person name="Fischer G."/>
            <person name="Durrens P."/>
            <person name="Casaregola S."/>
            <person name="Lafontaine I."/>
            <person name="de Montigny J."/>
            <person name="Marck C."/>
            <person name="Neuveglise C."/>
            <person name="Talla E."/>
            <person name="Goffard N."/>
            <person name="Frangeul L."/>
            <person name="Aigle M."/>
            <person name="Anthouard V."/>
            <person name="Babour A."/>
            <person name="Barbe V."/>
            <person name="Barnay S."/>
            <person name="Blanchin S."/>
            <person name="Beckerich J.-M."/>
            <person name="Beyne E."/>
            <person name="Bleykasten C."/>
            <person name="Boisrame A."/>
            <person name="Boyer J."/>
            <person name="Cattolico L."/>
            <person name="Confanioleri F."/>
            <person name="de Daruvar A."/>
            <person name="Despons L."/>
            <person name="Fabre E."/>
            <person name="Fairhead C."/>
            <person name="Ferry-Dumazet H."/>
            <person name="Groppi A."/>
            <person name="Hantraye F."/>
            <person name="Hennequin C."/>
            <person name="Jauniaux N."/>
            <person name="Joyet P."/>
            <person name="Kachouri R."/>
            <person name="Kerrest A."/>
            <person name="Koszul R."/>
            <person name="Lemaire M."/>
            <person name="Lesur I."/>
            <person name="Ma L."/>
            <person name="Muller H."/>
            <person name="Nicaud J.-M."/>
            <person name="Nikolski M."/>
            <person name="Oztas S."/>
            <person name="Ozier-Kalogeropoulos O."/>
            <person name="Pellenz S."/>
            <person name="Potier S."/>
            <person name="Richard G.-F."/>
            <person name="Straub M.-L."/>
            <person name="Suleau A."/>
            <person name="Swennen D."/>
            <person name="Tekaia F."/>
            <person name="Wesolowski-Louvel M."/>
            <person name="Westhof E."/>
            <person name="Wirth B."/>
            <person name="Zeniou-Meyer M."/>
            <person name="Zivanovic Y."/>
            <person name="Bolotin-Fukuhara M."/>
            <person name="Thierry A."/>
            <person name="Bouchier C."/>
            <person name="Caudron B."/>
            <person name="Scarpelli C."/>
            <person name="Gaillardin C."/>
            <person name="Weissenbach J."/>
            <person name="Wincker P."/>
            <person name="Souciet J.-L."/>
        </authorList>
    </citation>
    <scope>NUCLEOTIDE SEQUENCE [LARGE SCALE GENOMIC DNA]</scope>
    <source>
        <strain>ATCC 8585 / CBS 2359 / DSM 70799 / NBRC 1267 / NRRL Y-1140 / WM37</strain>
    </source>
</reference>